<keyword id="KW-1003">Cell membrane</keyword>
<keyword id="KW-0350">Heme biosynthesis</keyword>
<keyword id="KW-0472">Membrane</keyword>
<keyword id="KW-1185">Reference proteome</keyword>
<keyword id="KW-0808">Transferase</keyword>
<keyword id="KW-0812">Transmembrane</keyword>
<keyword id="KW-1133">Transmembrane helix</keyword>
<organism>
    <name type="scientific">Corynebacterium jeikeium (strain K411)</name>
    <dbReference type="NCBI Taxonomy" id="306537"/>
    <lineage>
        <taxon>Bacteria</taxon>
        <taxon>Bacillati</taxon>
        <taxon>Actinomycetota</taxon>
        <taxon>Actinomycetes</taxon>
        <taxon>Mycobacteriales</taxon>
        <taxon>Corynebacteriaceae</taxon>
        <taxon>Corynebacterium</taxon>
    </lineage>
</organism>
<proteinExistence type="inferred from homology"/>
<sequence length="312" mass="34730">MKTFAETAKAYLALTKPRVIELLLVATIPAMLQAARGEVNFGLILLTLIGGWMGAGAANTFNNVVDHDIDQLMRRTRRRPTARQTVSVGEARVFAWVLLIASVLWLGFLCHSWLAAGFIVLTNWFYVFVYTKWLKRRTWQNVIWGGAAGCMPVIVGWAVITDNNGGAFHAGWSSWLQAIILFMIIFFWTPPHTWALGMRYREDYEAAGVPMMPVVKPPLQVTRQILAYTWAAVITSLLLVPAASWIYLAAALISGGWFIIKAHMLHQGVKNGTPVKPMQLFFLSNNYLSILFVALSVDAVLGWQTLAHAVLG</sequence>
<feature type="chain" id="PRO_0000327044" description="Protoheme IX farnesyltransferase">
    <location>
        <begin position="1"/>
        <end position="312"/>
    </location>
</feature>
<feature type="transmembrane region" description="Helical" evidence="1">
    <location>
        <begin position="12"/>
        <end position="32"/>
    </location>
</feature>
<feature type="transmembrane region" description="Helical" evidence="1">
    <location>
        <begin position="41"/>
        <end position="61"/>
    </location>
</feature>
<feature type="transmembrane region" description="Helical" evidence="1">
    <location>
        <begin position="93"/>
        <end position="113"/>
    </location>
</feature>
<feature type="transmembrane region" description="Helical" evidence="1">
    <location>
        <begin position="114"/>
        <end position="134"/>
    </location>
</feature>
<feature type="transmembrane region" description="Helical" evidence="1">
    <location>
        <begin position="141"/>
        <end position="161"/>
    </location>
</feature>
<feature type="transmembrane region" description="Helical" evidence="1">
    <location>
        <begin position="168"/>
        <end position="188"/>
    </location>
</feature>
<feature type="transmembrane region" description="Helical" evidence="1">
    <location>
        <begin position="240"/>
        <end position="260"/>
    </location>
</feature>
<feature type="transmembrane region" description="Helical" evidence="1">
    <location>
        <begin position="290"/>
        <end position="310"/>
    </location>
</feature>
<gene>
    <name evidence="1" type="primary">ctaB</name>
    <name type="ordered locus">jk0991</name>
</gene>
<dbReference type="EC" id="2.5.1.141" evidence="1"/>
<dbReference type="EMBL" id="CR931997">
    <property type="protein sequence ID" value="CAI37155.1"/>
    <property type="molecule type" value="Genomic_DNA"/>
</dbReference>
<dbReference type="RefSeq" id="WP_011273568.1">
    <property type="nucleotide sequence ID" value="NC_007164.1"/>
</dbReference>
<dbReference type="SMR" id="Q4JVK2"/>
<dbReference type="STRING" id="306537.jk0991"/>
<dbReference type="KEGG" id="cjk:jk0991"/>
<dbReference type="PATRIC" id="fig|306537.10.peg.1003"/>
<dbReference type="eggNOG" id="COG0109">
    <property type="taxonomic scope" value="Bacteria"/>
</dbReference>
<dbReference type="HOGENOM" id="CLU_029631_0_1_11"/>
<dbReference type="OrthoDB" id="9814417at2"/>
<dbReference type="UniPathway" id="UPA00834">
    <property type="reaction ID" value="UER00712"/>
</dbReference>
<dbReference type="Proteomes" id="UP000000545">
    <property type="component" value="Chromosome"/>
</dbReference>
<dbReference type="GO" id="GO:0005886">
    <property type="term" value="C:plasma membrane"/>
    <property type="evidence" value="ECO:0007669"/>
    <property type="project" value="UniProtKB-SubCell"/>
</dbReference>
<dbReference type="GO" id="GO:0008495">
    <property type="term" value="F:protoheme IX farnesyltransferase activity"/>
    <property type="evidence" value="ECO:0007669"/>
    <property type="project" value="UniProtKB-UniRule"/>
</dbReference>
<dbReference type="GO" id="GO:0048034">
    <property type="term" value="P:heme O biosynthetic process"/>
    <property type="evidence" value="ECO:0007669"/>
    <property type="project" value="UniProtKB-UniRule"/>
</dbReference>
<dbReference type="CDD" id="cd13957">
    <property type="entry name" value="PT_UbiA_Cox10"/>
    <property type="match status" value="1"/>
</dbReference>
<dbReference type="Gene3D" id="1.10.357.140">
    <property type="entry name" value="UbiA prenyltransferase"/>
    <property type="match status" value="1"/>
</dbReference>
<dbReference type="HAMAP" id="MF_00154">
    <property type="entry name" value="CyoE_CtaB"/>
    <property type="match status" value="1"/>
</dbReference>
<dbReference type="InterPro" id="IPR006369">
    <property type="entry name" value="Protohaem_IX_farnesylTrfase"/>
</dbReference>
<dbReference type="InterPro" id="IPR000537">
    <property type="entry name" value="UbiA_prenyltransferase"/>
</dbReference>
<dbReference type="InterPro" id="IPR044878">
    <property type="entry name" value="UbiA_sf"/>
</dbReference>
<dbReference type="NCBIfam" id="TIGR01473">
    <property type="entry name" value="cyoE_ctaB"/>
    <property type="match status" value="1"/>
</dbReference>
<dbReference type="NCBIfam" id="NF003349">
    <property type="entry name" value="PRK04375.1-2"/>
    <property type="match status" value="1"/>
</dbReference>
<dbReference type="PANTHER" id="PTHR43448:SF7">
    <property type="entry name" value="4-HYDROXYBENZOATE SOLANESYLTRANSFERASE"/>
    <property type="match status" value="1"/>
</dbReference>
<dbReference type="PANTHER" id="PTHR43448">
    <property type="entry name" value="PROTOHEME IX FARNESYLTRANSFERASE, MITOCHONDRIAL"/>
    <property type="match status" value="1"/>
</dbReference>
<dbReference type="Pfam" id="PF01040">
    <property type="entry name" value="UbiA"/>
    <property type="match status" value="1"/>
</dbReference>
<reference key="1">
    <citation type="journal article" date="2005" name="J. Bacteriol.">
        <title>Complete genome sequence and analysis of the multiresistant nosocomial pathogen Corynebacterium jeikeium K411, a lipid-requiring bacterium of the human skin flora.</title>
        <authorList>
            <person name="Tauch A."/>
            <person name="Kaiser O."/>
            <person name="Hain T."/>
            <person name="Goesmann A."/>
            <person name="Weisshaar B."/>
            <person name="Albersmeier A."/>
            <person name="Bekel T."/>
            <person name="Bischoff N."/>
            <person name="Brune I."/>
            <person name="Chakraborty T."/>
            <person name="Kalinowski J."/>
            <person name="Meyer F."/>
            <person name="Rupp O."/>
            <person name="Schneiker S."/>
            <person name="Viehoever P."/>
            <person name="Puehler A."/>
        </authorList>
    </citation>
    <scope>NUCLEOTIDE SEQUENCE [LARGE SCALE GENOMIC DNA]</scope>
    <source>
        <strain>K411</strain>
    </source>
</reference>
<accession>Q4JVK2</accession>
<name>COXX_CORJK</name>
<evidence type="ECO:0000255" key="1">
    <source>
        <dbReference type="HAMAP-Rule" id="MF_00154"/>
    </source>
</evidence>
<comment type="function">
    <text evidence="1">Converts heme B (protoheme IX) to heme O by substitution of the vinyl group on carbon 2 of heme B porphyrin ring with a hydroxyethyl farnesyl side group.</text>
</comment>
<comment type="catalytic activity">
    <reaction evidence="1">
        <text>heme b + (2E,6E)-farnesyl diphosphate + H2O = Fe(II)-heme o + diphosphate</text>
        <dbReference type="Rhea" id="RHEA:28070"/>
        <dbReference type="ChEBI" id="CHEBI:15377"/>
        <dbReference type="ChEBI" id="CHEBI:33019"/>
        <dbReference type="ChEBI" id="CHEBI:60344"/>
        <dbReference type="ChEBI" id="CHEBI:60530"/>
        <dbReference type="ChEBI" id="CHEBI:175763"/>
        <dbReference type="EC" id="2.5.1.141"/>
    </reaction>
</comment>
<comment type="pathway">
    <text evidence="1">Porphyrin-containing compound metabolism; heme O biosynthesis; heme O from protoheme: step 1/1.</text>
</comment>
<comment type="subcellular location">
    <subcellularLocation>
        <location evidence="1">Cell membrane</location>
        <topology evidence="1">Multi-pass membrane protein</topology>
    </subcellularLocation>
</comment>
<comment type="miscellaneous">
    <text evidence="1">Carbon 2 of the heme B porphyrin ring is defined according to the Fischer nomenclature.</text>
</comment>
<comment type="similarity">
    <text evidence="1">Belongs to the UbiA prenyltransferase family. Protoheme IX farnesyltransferase subfamily.</text>
</comment>
<protein>
    <recommendedName>
        <fullName evidence="1">Protoheme IX farnesyltransferase</fullName>
        <ecNumber evidence="1">2.5.1.141</ecNumber>
    </recommendedName>
    <alternativeName>
        <fullName evidence="1">Heme B farnesyltransferase</fullName>
    </alternativeName>
    <alternativeName>
        <fullName evidence="1">Heme O synthase</fullName>
    </alternativeName>
</protein>